<feature type="chain" id="PRO_0000084283" description="Jasmonate-induced protein homolog">
    <location>
        <begin position="1"/>
        <end position="185"/>
    </location>
</feature>
<protein>
    <recommendedName>
        <fullName>Jasmonate-induced protein homolog</fullName>
    </recommendedName>
</protein>
<organism>
    <name type="scientific">Atriplex canescens</name>
    <name type="common">Fourwing saltbush</name>
    <name type="synonym">Calligonum canescens</name>
    <dbReference type="NCBI Taxonomy" id="35922"/>
    <lineage>
        <taxon>Eukaryota</taxon>
        <taxon>Viridiplantae</taxon>
        <taxon>Streptophyta</taxon>
        <taxon>Embryophyta</taxon>
        <taxon>Tracheophyta</taxon>
        <taxon>Spermatophyta</taxon>
        <taxon>Magnoliopsida</taxon>
        <taxon>eudicotyledons</taxon>
        <taxon>Gunneridae</taxon>
        <taxon>Pentapetalae</taxon>
        <taxon>Caryophyllales</taxon>
        <taxon>Chenopodiaceae</taxon>
        <taxon>Chenopodioideae</taxon>
        <taxon>Atripliceae</taxon>
        <taxon>Atriplex</taxon>
    </lineage>
</organism>
<evidence type="ECO:0000305" key="1"/>
<reference key="1">
    <citation type="journal article" date="1995" name="Plant Physiol.">
        <title>Nucleotide sequence of a cDNA from Atriplex canescens (Pursh.) Nutt. A homolog of a jasmonate-induced protein from barley.</title>
        <authorList>
            <person name="Cairney J."/>
            <person name="Newton R.J."/>
            <person name="Funkhouser E.A."/>
            <person name="Chang S."/>
        </authorList>
    </citation>
    <scope>NUCLEOTIDE SEQUENCE [MRNA]</scope>
</reference>
<comment type="similarity">
    <text evidence="1">Belongs to the jasmonate-induced protein family.</text>
</comment>
<accession>P42764</accession>
<dbReference type="EMBL" id="U15657">
    <property type="protein sequence ID" value="AAA86977.1"/>
    <property type="molecule type" value="mRNA"/>
</dbReference>
<dbReference type="SMR" id="P42764"/>
<dbReference type="InterPro" id="IPR053085">
    <property type="entry name" value="Jasmonate-induced_protein"/>
</dbReference>
<dbReference type="InterPro" id="IPR049065">
    <property type="entry name" value="Nakanori"/>
</dbReference>
<dbReference type="PANTHER" id="PTHR36482:SF6">
    <property type="entry name" value="JASMONATE-INDUCED PROTEIN HOMOLOG"/>
    <property type="match status" value="1"/>
</dbReference>
<dbReference type="PANTHER" id="PTHR36482">
    <property type="entry name" value="OSJNBA0024J22.15 PROTEIN"/>
    <property type="match status" value="1"/>
</dbReference>
<dbReference type="Pfam" id="PF21230">
    <property type="entry name" value="Nakanori"/>
    <property type="match status" value="1"/>
</dbReference>
<proteinExistence type="evidence at transcript level"/>
<name>JIPH_ATRCA</name>
<sequence>MASTQAMGMTEQQKKSVDEMVEKATNMGVNVQAQNSAVVSMINQTNVSMTFNENHNWSGSVVGTGYPKSIPTKQSRQFIHQGDAKDGSQGAVVYYGSNANGEPCGWLLAWCAPTNVTPTKPNRVYVDCGAQSKFDTISWDTIKAKLDVGPATTNFTDVDTETTIAAGVTSTGSFASVGAAFGLST</sequence>